<protein>
    <recommendedName>
        <fullName evidence="1">SsrA-binding protein</fullName>
    </recommendedName>
    <alternativeName>
        <fullName evidence="1">Small protein B</fullName>
    </alternativeName>
</protein>
<organism>
    <name type="scientific">Escherichia coli O139:H28 (strain E24377A / ETEC)</name>
    <dbReference type="NCBI Taxonomy" id="331111"/>
    <lineage>
        <taxon>Bacteria</taxon>
        <taxon>Pseudomonadati</taxon>
        <taxon>Pseudomonadota</taxon>
        <taxon>Gammaproteobacteria</taxon>
        <taxon>Enterobacterales</taxon>
        <taxon>Enterobacteriaceae</taxon>
        <taxon>Escherichia</taxon>
    </lineage>
</organism>
<sequence>MTKKKAHKPGSATIALNKRARHEYFIEEEFEAGLALQGWEVKSLRAGKANISDSYVLLRDGEAFLFGANITPMAVASTHVVCDPTRTRKLLLNQRELDSLYGRVNREGYTVVALSLYWKNAWCKVKIGVAKGKKQHDKRSDIKEREWQVDKARIMKNAHR</sequence>
<accession>A7ZQ60</accession>
<reference key="1">
    <citation type="journal article" date="2008" name="J. Bacteriol.">
        <title>The pangenome structure of Escherichia coli: comparative genomic analysis of E. coli commensal and pathogenic isolates.</title>
        <authorList>
            <person name="Rasko D.A."/>
            <person name="Rosovitz M.J."/>
            <person name="Myers G.S.A."/>
            <person name="Mongodin E.F."/>
            <person name="Fricke W.F."/>
            <person name="Gajer P."/>
            <person name="Crabtree J."/>
            <person name="Sebaihia M."/>
            <person name="Thomson N.R."/>
            <person name="Chaudhuri R."/>
            <person name="Henderson I.R."/>
            <person name="Sperandio V."/>
            <person name="Ravel J."/>
        </authorList>
    </citation>
    <scope>NUCLEOTIDE SEQUENCE [LARGE SCALE GENOMIC DNA]</scope>
    <source>
        <strain>E24377A / ETEC</strain>
    </source>
</reference>
<feature type="chain" id="PRO_1000057205" description="SsrA-binding protein">
    <location>
        <begin position="1"/>
        <end position="160"/>
    </location>
</feature>
<dbReference type="EMBL" id="CP000800">
    <property type="protein sequence ID" value="ABV17024.1"/>
    <property type="molecule type" value="Genomic_DNA"/>
</dbReference>
<dbReference type="RefSeq" id="WP_000162574.1">
    <property type="nucleotide sequence ID" value="NC_009801.1"/>
</dbReference>
<dbReference type="SMR" id="A7ZQ60"/>
<dbReference type="GeneID" id="93774470"/>
<dbReference type="KEGG" id="ecw:EcE24377A_2904"/>
<dbReference type="HOGENOM" id="CLU_108953_3_0_6"/>
<dbReference type="Proteomes" id="UP000001122">
    <property type="component" value="Chromosome"/>
</dbReference>
<dbReference type="GO" id="GO:0005829">
    <property type="term" value="C:cytosol"/>
    <property type="evidence" value="ECO:0007669"/>
    <property type="project" value="TreeGrafter"/>
</dbReference>
<dbReference type="GO" id="GO:0003723">
    <property type="term" value="F:RNA binding"/>
    <property type="evidence" value="ECO:0007669"/>
    <property type="project" value="UniProtKB-UniRule"/>
</dbReference>
<dbReference type="GO" id="GO:0070929">
    <property type="term" value="P:trans-translation"/>
    <property type="evidence" value="ECO:0007669"/>
    <property type="project" value="UniProtKB-UniRule"/>
</dbReference>
<dbReference type="CDD" id="cd09294">
    <property type="entry name" value="SmpB"/>
    <property type="match status" value="1"/>
</dbReference>
<dbReference type="FunFam" id="2.40.280.10:FF:000001">
    <property type="entry name" value="SsrA-binding protein"/>
    <property type="match status" value="1"/>
</dbReference>
<dbReference type="Gene3D" id="2.40.280.10">
    <property type="match status" value="1"/>
</dbReference>
<dbReference type="HAMAP" id="MF_00023">
    <property type="entry name" value="SmpB"/>
    <property type="match status" value="1"/>
</dbReference>
<dbReference type="InterPro" id="IPR023620">
    <property type="entry name" value="SmpB"/>
</dbReference>
<dbReference type="InterPro" id="IPR000037">
    <property type="entry name" value="SsrA-bd_prot"/>
</dbReference>
<dbReference type="InterPro" id="IPR020081">
    <property type="entry name" value="SsrA-bd_prot_CS"/>
</dbReference>
<dbReference type="NCBIfam" id="NF003843">
    <property type="entry name" value="PRK05422.1"/>
    <property type="match status" value="1"/>
</dbReference>
<dbReference type="NCBIfam" id="TIGR00086">
    <property type="entry name" value="smpB"/>
    <property type="match status" value="1"/>
</dbReference>
<dbReference type="PANTHER" id="PTHR30308:SF2">
    <property type="entry name" value="SSRA-BINDING PROTEIN"/>
    <property type="match status" value="1"/>
</dbReference>
<dbReference type="PANTHER" id="PTHR30308">
    <property type="entry name" value="TMRNA-BINDING COMPONENT OF TRANS-TRANSLATION TAGGING COMPLEX"/>
    <property type="match status" value="1"/>
</dbReference>
<dbReference type="Pfam" id="PF01668">
    <property type="entry name" value="SmpB"/>
    <property type="match status" value="1"/>
</dbReference>
<dbReference type="SUPFAM" id="SSF74982">
    <property type="entry name" value="Small protein B (SmpB)"/>
    <property type="match status" value="1"/>
</dbReference>
<dbReference type="PROSITE" id="PS01317">
    <property type="entry name" value="SSRP"/>
    <property type="match status" value="1"/>
</dbReference>
<keyword id="KW-0963">Cytoplasm</keyword>
<keyword id="KW-1185">Reference proteome</keyword>
<keyword id="KW-0694">RNA-binding</keyword>
<gene>
    <name evidence="1" type="primary">smpB</name>
    <name type="ordered locus">EcE24377A_2904</name>
</gene>
<name>SSRP_ECO24</name>
<evidence type="ECO:0000255" key="1">
    <source>
        <dbReference type="HAMAP-Rule" id="MF_00023"/>
    </source>
</evidence>
<comment type="function">
    <text evidence="1">Required for rescue of stalled ribosomes mediated by trans-translation. Binds to transfer-messenger RNA (tmRNA), required for stable association of tmRNA with ribosomes. tmRNA and SmpB together mimic tRNA shape, replacing the anticodon stem-loop with SmpB. tmRNA is encoded by the ssrA gene; the 2 termini fold to resemble tRNA(Ala) and it encodes a 'tag peptide', a short internal open reading frame. During trans-translation Ala-aminoacylated tmRNA acts like a tRNA, entering the A-site of stalled ribosomes, displacing the stalled mRNA. The ribosome then switches to translate the ORF on the tmRNA; the nascent peptide is terminated with the 'tag peptide' encoded by the tmRNA and targeted for degradation. The ribosome is freed to recommence translation, which seems to be the essential function of trans-translation.</text>
</comment>
<comment type="subcellular location">
    <subcellularLocation>
        <location evidence="1">Cytoplasm</location>
    </subcellularLocation>
    <text evidence="1">The tmRNA-SmpB complex associates with stalled 70S ribosomes.</text>
</comment>
<comment type="similarity">
    <text evidence="1">Belongs to the SmpB family.</text>
</comment>
<proteinExistence type="inferred from homology"/>